<comment type="catalytic activity">
    <reaction evidence="1">
        <text>tRNA(Lys) + L-lysine + ATP = L-lysyl-tRNA(Lys) + AMP + diphosphate</text>
        <dbReference type="Rhea" id="RHEA:20792"/>
        <dbReference type="Rhea" id="RHEA-COMP:9696"/>
        <dbReference type="Rhea" id="RHEA-COMP:9697"/>
        <dbReference type="ChEBI" id="CHEBI:30616"/>
        <dbReference type="ChEBI" id="CHEBI:32551"/>
        <dbReference type="ChEBI" id="CHEBI:33019"/>
        <dbReference type="ChEBI" id="CHEBI:78442"/>
        <dbReference type="ChEBI" id="CHEBI:78529"/>
        <dbReference type="ChEBI" id="CHEBI:456215"/>
        <dbReference type="EC" id="6.1.1.6"/>
    </reaction>
</comment>
<comment type="cofactor">
    <cofactor evidence="1">
        <name>Mg(2+)</name>
        <dbReference type="ChEBI" id="CHEBI:18420"/>
    </cofactor>
    <text evidence="1">Binds 3 Mg(2+) ions per subunit.</text>
</comment>
<comment type="subunit">
    <text evidence="1">Homodimer.</text>
</comment>
<comment type="subcellular location">
    <subcellularLocation>
        <location evidence="1">Cytoplasm</location>
    </subcellularLocation>
</comment>
<comment type="similarity">
    <text evidence="1">Belongs to the class-II aminoacyl-tRNA synthetase family.</text>
</comment>
<accession>Q7NG18</accession>
<evidence type="ECO:0000255" key="1">
    <source>
        <dbReference type="HAMAP-Rule" id="MF_00252"/>
    </source>
</evidence>
<organism>
    <name type="scientific">Gloeobacter violaceus (strain ATCC 29082 / PCC 7421)</name>
    <dbReference type="NCBI Taxonomy" id="251221"/>
    <lineage>
        <taxon>Bacteria</taxon>
        <taxon>Bacillati</taxon>
        <taxon>Cyanobacteriota</taxon>
        <taxon>Cyanophyceae</taxon>
        <taxon>Gloeobacterales</taxon>
        <taxon>Gloeobacteraceae</taxon>
        <taxon>Gloeobacter</taxon>
    </lineage>
</organism>
<keyword id="KW-0030">Aminoacyl-tRNA synthetase</keyword>
<keyword id="KW-0067">ATP-binding</keyword>
<keyword id="KW-0963">Cytoplasm</keyword>
<keyword id="KW-0436">Ligase</keyword>
<keyword id="KW-0460">Magnesium</keyword>
<keyword id="KW-0479">Metal-binding</keyword>
<keyword id="KW-0547">Nucleotide-binding</keyword>
<keyword id="KW-0648">Protein biosynthesis</keyword>
<keyword id="KW-1185">Reference proteome</keyword>
<proteinExistence type="inferred from homology"/>
<feature type="chain" id="PRO_0000152632" description="Lysine--tRNA ligase">
    <location>
        <begin position="1"/>
        <end position="497"/>
    </location>
</feature>
<feature type="binding site" evidence="1">
    <location>
        <position position="405"/>
    </location>
    <ligand>
        <name>Mg(2+)</name>
        <dbReference type="ChEBI" id="CHEBI:18420"/>
        <label>1</label>
    </ligand>
</feature>
<feature type="binding site" evidence="1">
    <location>
        <position position="412"/>
    </location>
    <ligand>
        <name>Mg(2+)</name>
        <dbReference type="ChEBI" id="CHEBI:18420"/>
        <label>1</label>
    </ligand>
</feature>
<feature type="binding site" evidence="1">
    <location>
        <position position="412"/>
    </location>
    <ligand>
        <name>Mg(2+)</name>
        <dbReference type="ChEBI" id="CHEBI:18420"/>
        <label>2</label>
    </ligand>
</feature>
<gene>
    <name evidence="1" type="primary">lysS</name>
    <name type="ordered locus">gll3356</name>
</gene>
<name>SYK_GLOVI</name>
<reference key="1">
    <citation type="journal article" date="2003" name="DNA Res.">
        <title>Complete genome structure of Gloeobacter violaceus PCC 7421, a cyanobacterium that lacks thylakoids.</title>
        <authorList>
            <person name="Nakamura Y."/>
            <person name="Kaneko T."/>
            <person name="Sato S."/>
            <person name="Mimuro M."/>
            <person name="Miyashita H."/>
            <person name="Tsuchiya T."/>
            <person name="Sasamoto S."/>
            <person name="Watanabe A."/>
            <person name="Kawashima K."/>
            <person name="Kishida Y."/>
            <person name="Kiyokawa C."/>
            <person name="Kohara M."/>
            <person name="Matsumoto M."/>
            <person name="Matsuno A."/>
            <person name="Nakazaki N."/>
            <person name="Shimpo S."/>
            <person name="Takeuchi C."/>
            <person name="Yamada M."/>
            <person name="Tabata S."/>
        </authorList>
    </citation>
    <scope>NUCLEOTIDE SEQUENCE [LARGE SCALE GENOMIC DNA]</scope>
    <source>
        <strain>ATCC 29082 / PCC 7421</strain>
    </source>
</reference>
<sequence length="497" mass="55958">MAEEDLRRTRLEKAEQWRVHNQNPYPYRYERTHMAGDLQAKYKDLENGQEVEDAVSVAGRIVARRVLGSVAFFGLQDDSGTIQLYFDKKRIRESMGADAFKWLDKLTDTGDFIGAHGTIRRTERGELSVYVHEYELLCKSILPLPSEYYGLTDVQKRYRQRYLDLIANPGVRETFRKRALIVREIRRFLDERGFLEIETPVLQTEAGGAAARPFTTHHNALGLDMFLRIATELHLKRLVVGGFEKVYELGRIFRNEGISTRHNPEFTTVEIYEAYSDYFDIMDLVETLLRAVAHIVLGSTELVCEGNTIDLGAPFRRITMFDLVAQMTGVALAGLRDGEKAARLAEAVGVEVTAGASVGQILYQLFEEKCEAKLTQPTFVLDYPVEISPLAKAHRSVPNMVERFELYINGRETADGFSELNDPVDQRARLEAQAKAKAAGDLEAHPFDEDFLTAIEHGLPPTGGVGIGIDRLVMLLTDSPSIRDVIAFPTLRPEAGE</sequence>
<dbReference type="EC" id="6.1.1.6" evidence="1"/>
<dbReference type="EMBL" id="BA000045">
    <property type="protein sequence ID" value="BAC91297.1"/>
    <property type="molecule type" value="Genomic_DNA"/>
</dbReference>
<dbReference type="RefSeq" id="NP_926302.1">
    <property type="nucleotide sequence ID" value="NC_005125.1"/>
</dbReference>
<dbReference type="RefSeq" id="WP_011143345.1">
    <property type="nucleotide sequence ID" value="NC_005125.1"/>
</dbReference>
<dbReference type="SMR" id="Q7NG18"/>
<dbReference type="FunCoup" id="Q7NG18">
    <property type="interactions" value="411"/>
</dbReference>
<dbReference type="STRING" id="251221.gene:10760867"/>
<dbReference type="EnsemblBacteria" id="BAC91297">
    <property type="protein sequence ID" value="BAC91297"/>
    <property type="gene ID" value="BAC91297"/>
</dbReference>
<dbReference type="KEGG" id="gvi:gll3356"/>
<dbReference type="PATRIC" id="fig|251221.4.peg.3389"/>
<dbReference type="eggNOG" id="COG1190">
    <property type="taxonomic scope" value="Bacteria"/>
</dbReference>
<dbReference type="HOGENOM" id="CLU_008255_6_0_3"/>
<dbReference type="InParanoid" id="Q7NG18"/>
<dbReference type="OrthoDB" id="9802326at2"/>
<dbReference type="PhylomeDB" id="Q7NG18"/>
<dbReference type="Proteomes" id="UP000000557">
    <property type="component" value="Chromosome"/>
</dbReference>
<dbReference type="GO" id="GO:0005737">
    <property type="term" value="C:cytoplasm"/>
    <property type="evidence" value="ECO:0000318"/>
    <property type="project" value="GO_Central"/>
</dbReference>
<dbReference type="GO" id="GO:0005524">
    <property type="term" value="F:ATP binding"/>
    <property type="evidence" value="ECO:0007669"/>
    <property type="project" value="UniProtKB-UniRule"/>
</dbReference>
<dbReference type="GO" id="GO:0004824">
    <property type="term" value="F:lysine-tRNA ligase activity"/>
    <property type="evidence" value="ECO:0000318"/>
    <property type="project" value="GO_Central"/>
</dbReference>
<dbReference type="GO" id="GO:0000287">
    <property type="term" value="F:magnesium ion binding"/>
    <property type="evidence" value="ECO:0007669"/>
    <property type="project" value="UniProtKB-UniRule"/>
</dbReference>
<dbReference type="GO" id="GO:0000049">
    <property type="term" value="F:tRNA binding"/>
    <property type="evidence" value="ECO:0000318"/>
    <property type="project" value="GO_Central"/>
</dbReference>
<dbReference type="GO" id="GO:0006430">
    <property type="term" value="P:lysyl-tRNA aminoacylation"/>
    <property type="evidence" value="ECO:0000318"/>
    <property type="project" value="GO_Central"/>
</dbReference>
<dbReference type="CDD" id="cd00775">
    <property type="entry name" value="LysRS_core"/>
    <property type="match status" value="1"/>
</dbReference>
<dbReference type="CDD" id="cd04322">
    <property type="entry name" value="LysRS_N"/>
    <property type="match status" value="1"/>
</dbReference>
<dbReference type="FunFam" id="2.40.50.140:FF:000024">
    <property type="entry name" value="Lysine--tRNA ligase"/>
    <property type="match status" value="1"/>
</dbReference>
<dbReference type="FunFam" id="3.30.930.10:FF:000238">
    <property type="entry name" value="Lysine--tRNA ligase"/>
    <property type="match status" value="1"/>
</dbReference>
<dbReference type="Gene3D" id="3.30.930.10">
    <property type="entry name" value="Bira Bifunctional Protein, Domain 2"/>
    <property type="match status" value="1"/>
</dbReference>
<dbReference type="Gene3D" id="2.40.50.140">
    <property type="entry name" value="Nucleic acid-binding proteins"/>
    <property type="match status" value="1"/>
</dbReference>
<dbReference type="HAMAP" id="MF_00252">
    <property type="entry name" value="Lys_tRNA_synth_class2"/>
    <property type="match status" value="1"/>
</dbReference>
<dbReference type="InterPro" id="IPR004364">
    <property type="entry name" value="Aa-tRNA-synt_II"/>
</dbReference>
<dbReference type="InterPro" id="IPR006195">
    <property type="entry name" value="aa-tRNA-synth_II"/>
</dbReference>
<dbReference type="InterPro" id="IPR045864">
    <property type="entry name" value="aa-tRNA-synth_II/BPL/LPL"/>
</dbReference>
<dbReference type="InterPro" id="IPR002313">
    <property type="entry name" value="Lys-tRNA-ligase_II"/>
</dbReference>
<dbReference type="InterPro" id="IPR044136">
    <property type="entry name" value="Lys-tRNA-ligase_II_N"/>
</dbReference>
<dbReference type="InterPro" id="IPR018149">
    <property type="entry name" value="Lys-tRNA-synth_II_C"/>
</dbReference>
<dbReference type="InterPro" id="IPR012340">
    <property type="entry name" value="NA-bd_OB-fold"/>
</dbReference>
<dbReference type="InterPro" id="IPR004365">
    <property type="entry name" value="NA-bd_OB_tRNA"/>
</dbReference>
<dbReference type="NCBIfam" id="TIGR00499">
    <property type="entry name" value="lysS_bact"/>
    <property type="match status" value="1"/>
</dbReference>
<dbReference type="NCBIfam" id="NF001756">
    <property type="entry name" value="PRK00484.1"/>
    <property type="match status" value="1"/>
</dbReference>
<dbReference type="PANTHER" id="PTHR42918:SF15">
    <property type="entry name" value="LYSINE--TRNA LIGASE, CHLOROPLASTIC_MITOCHONDRIAL"/>
    <property type="match status" value="1"/>
</dbReference>
<dbReference type="PANTHER" id="PTHR42918">
    <property type="entry name" value="LYSYL-TRNA SYNTHETASE"/>
    <property type="match status" value="1"/>
</dbReference>
<dbReference type="Pfam" id="PF00152">
    <property type="entry name" value="tRNA-synt_2"/>
    <property type="match status" value="1"/>
</dbReference>
<dbReference type="Pfam" id="PF01336">
    <property type="entry name" value="tRNA_anti-codon"/>
    <property type="match status" value="1"/>
</dbReference>
<dbReference type="PRINTS" id="PR00982">
    <property type="entry name" value="TRNASYNTHLYS"/>
</dbReference>
<dbReference type="SUPFAM" id="SSF55681">
    <property type="entry name" value="Class II aaRS and biotin synthetases"/>
    <property type="match status" value="1"/>
</dbReference>
<dbReference type="SUPFAM" id="SSF50249">
    <property type="entry name" value="Nucleic acid-binding proteins"/>
    <property type="match status" value="1"/>
</dbReference>
<dbReference type="PROSITE" id="PS50862">
    <property type="entry name" value="AA_TRNA_LIGASE_II"/>
    <property type="match status" value="1"/>
</dbReference>
<protein>
    <recommendedName>
        <fullName evidence="1">Lysine--tRNA ligase</fullName>
        <ecNumber evidence="1">6.1.1.6</ecNumber>
    </recommendedName>
    <alternativeName>
        <fullName evidence="1">Lysyl-tRNA synthetase</fullName>
        <shortName evidence="1">LysRS</shortName>
    </alternativeName>
</protein>